<dbReference type="EC" id="2.7.4.3" evidence="1"/>
<dbReference type="EMBL" id="BA000028">
    <property type="protein sequence ID" value="BAC12096.1"/>
    <property type="molecule type" value="Genomic_DNA"/>
</dbReference>
<dbReference type="RefSeq" id="WP_011064543.1">
    <property type="nucleotide sequence ID" value="NC_004193.1"/>
</dbReference>
<dbReference type="SMR" id="Q8ETW3"/>
<dbReference type="STRING" id="221109.gene:10732330"/>
<dbReference type="KEGG" id="oih:OB0140"/>
<dbReference type="eggNOG" id="COG0563">
    <property type="taxonomic scope" value="Bacteria"/>
</dbReference>
<dbReference type="HOGENOM" id="CLU_032354_1_2_9"/>
<dbReference type="OrthoDB" id="9805030at2"/>
<dbReference type="PhylomeDB" id="Q8ETW3"/>
<dbReference type="UniPathway" id="UPA00588">
    <property type="reaction ID" value="UER00649"/>
</dbReference>
<dbReference type="Proteomes" id="UP000000822">
    <property type="component" value="Chromosome"/>
</dbReference>
<dbReference type="GO" id="GO:0005737">
    <property type="term" value="C:cytoplasm"/>
    <property type="evidence" value="ECO:0007669"/>
    <property type="project" value="UniProtKB-SubCell"/>
</dbReference>
<dbReference type="GO" id="GO:0004017">
    <property type="term" value="F:adenylate kinase activity"/>
    <property type="evidence" value="ECO:0007669"/>
    <property type="project" value="UniProtKB-UniRule"/>
</dbReference>
<dbReference type="GO" id="GO:0005524">
    <property type="term" value="F:ATP binding"/>
    <property type="evidence" value="ECO:0007669"/>
    <property type="project" value="UniProtKB-UniRule"/>
</dbReference>
<dbReference type="GO" id="GO:0008270">
    <property type="term" value="F:zinc ion binding"/>
    <property type="evidence" value="ECO:0007669"/>
    <property type="project" value="UniProtKB-UniRule"/>
</dbReference>
<dbReference type="GO" id="GO:0044209">
    <property type="term" value="P:AMP salvage"/>
    <property type="evidence" value="ECO:0007669"/>
    <property type="project" value="UniProtKB-UniRule"/>
</dbReference>
<dbReference type="CDD" id="cd01428">
    <property type="entry name" value="ADK"/>
    <property type="match status" value="1"/>
</dbReference>
<dbReference type="FunFam" id="3.40.50.300:FF:000106">
    <property type="entry name" value="Adenylate kinase mitochondrial"/>
    <property type="match status" value="1"/>
</dbReference>
<dbReference type="Gene3D" id="3.40.50.300">
    <property type="entry name" value="P-loop containing nucleotide triphosphate hydrolases"/>
    <property type="match status" value="1"/>
</dbReference>
<dbReference type="HAMAP" id="MF_00235">
    <property type="entry name" value="Adenylate_kinase_Adk"/>
    <property type="match status" value="1"/>
</dbReference>
<dbReference type="InterPro" id="IPR006259">
    <property type="entry name" value="Adenyl_kin_sub"/>
</dbReference>
<dbReference type="InterPro" id="IPR000850">
    <property type="entry name" value="Adenylat/UMP-CMP_kin"/>
</dbReference>
<dbReference type="InterPro" id="IPR033690">
    <property type="entry name" value="Adenylat_kinase_CS"/>
</dbReference>
<dbReference type="InterPro" id="IPR007862">
    <property type="entry name" value="Adenylate_kinase_lid-dom"/>
</dbReference>
<dbReference type="InterPro" id="IPR027417">
    <property type="entry name" value="P-loop_NTPase"/>
</dbReference>
<dbReference type="NCBIfam" id="TIGR01351">
    <property type="entry name" value="adk"/>
    <property type="match status" value="1"/>
</dbReference>
<dbReference type="NCBIfam" id="NF001380">
    <property type="entry name" value="PRK00279.1-2"/>
    <property type="match status" value="1"/>
</dbReference>
<dbReference type="NCBIfam" id="NF001381">
    <property type="entry name" value="PRK00279.1-3"/>
    <property type="match status" value="1"/>
</dbReference>
<dbReference type="NCBIfam" id="NF011100">
    <property type="entry name" value="PRK14527.1"/>
    <property type="match status" value="1"/>
</dbReference>
<dbReference type="PANTHER" id="PTHR23359">
    <property type="entry name" value="NUCLEOTIDE KINASE"/>
    <property type="match status" value="1"/>
</dbReference>
<dbReference type="Pfam" id="PF00406">
    <property type="entry name" value="ADK"/>
    <property type="match status" value="1"/>
</dbReference>
<dbReference type="Pfam" id="PF05191">
    <property type="entry name" value="ADK_lid"/>
    <property type="match status" value="1"/>
</dbReference>
<dbReference type="PRINTS" id="PR00094">
    <property type="entry name" value="ADENYLTKNASE"/>
</dbReference>
<dbReference type="SUPFAM" id="SSF52540">
    <property type="entry name" value="P-loop containing nucleoside triphosphate hydrolases"/>
    <property type="match status" value="1"/>
</dbReference>
<dbReference type="PROSITE" id="PS00113">
    <property type="entry name" value="ADENYLATE_KINASE"/>
    <property type="match status" value="1"/>
</dbReference>
<gene>
    <name evidence="1" type="primary">adk</name>
    <name type="ordered locus">OB0140</name>
</gene>
<sequence>MNLILMGLPGAGKGTQAAKINEKYNIPHISTGDMFRLAIKEGTELGKKAKEFMDQGDLVPDEVTVGIVKERLAMDDCANGFLLDGFPRTTRQAEELQNLLSDLGKSIDYVIHVDVPEEKLVERLTGRRICPTCGTAYHVVYNPPKEEGICDKDGSQLIQRDDDQPETVKNRLAVNIEQTQPLLDFYQDKGYLVKVNGDRDINVVFQDIESILEKK</sequence>
<name>KAD_OCEIH</name>
<organism>
    <name type="scientific">Oceanobacillus iheyensis (strain DSM 14371 / CIP 107618 / JCM 11309 / KCTC 3954 / HTE831)</name>
    <dbReference type="NCBI Taxonomy" id="221109"/>
    <lineage>
        <taxon>Bacteria</taxon>
        <taxon>Bacillati</taxon>
        <taxon>Bacillota</taxon>
        <taxon>Bacilli</taxon>
        <taxon>Bacillales</taxon>
        <taxon>Bacillaceae</taxon>
        <taxon>Oceanobacillus</taxon>
    </lineage>
</organism>
<feature type="chain" id="PRO_0000158819" description="Adenylate kinase">
    <location>
        <begin position="1"/>
        <end position="215"/>
    </location>
</feature>
<feature type="region of interest" description="NMP" evidence="1">
    <location>
        <begin position="30"/>
        <end position="59"/>
    </location>
</feature>
<feature type="region of interest" description="LID" evidence="1">
    <location>
        <begin position="126"/>
        <end position="163"/>
    </location>
</feature>
<feature type="binding site" evidence="1">
    <location>
        <begin position="10"/>
        <end position="15"/>
    </location>
    <ligand>
        <name>ATP</name>
        <dbReference type="ChEBI" id="CHEBI:30616"/>
    </ligand>
</feature>
<feature type="binding site" evidence="1">
    <location>
        <position position="31"/>
    </location>
    <ligand>
        <name>AMP</name>
        <dbReference type="ChEBI" id="CHEBI:456215"/>
    </ligand>
</feature>
<feature type="binding site" evidence="1">
    <location>
        <position position="36"/>
    </location>
    <ligand>
        <name>AMP</name>
        <dbReference type="ChEBI" id="CHEBI:456215"/>
    </ligand>
</feature>
<feature type="binding site" evidence="1">
    <location>
        <begin position="57"/>
        <end position="59"/>
    </location>
    <ligand>
        <name>AMP</name>
        <dbReference type="ChEBI" id="CHEBI:456215"/>
    </ligand>
</feature>
<feature type="binding site" evidence="1">
    <location>
        <begin position="85"/>
        <end position="88"/>
    </location>
    <ligand>
        <name>AMP</name>
        <dbReference type="ChEBI" id="CHEBI:456215"/>
    </ligand>
</feature>
<feature type="binding site" evidence="1">
    <location>
        <position position="92"/>
    </location>
    <ligand>
        <name>AMP</name>
        <dbReference type="ChEBI" id="CHEBI:456215"/>
    </ligand>
</feature>
<feature type="binding site" evidence="1">
    <location>
        <position position="127"/>
    </location>
    <ligand>
        <name>ATP</name>
        <dbReference type="ChEBI" id="CHEBI:30616"/>
    </ligand>
</feature>
<feature type="binding site" evidence="1">
    <location>
        <position position="130"/>
    </location>
    <ligand>
        <name>Zn(2+)</name>
        <dbReference type="ChEBI" id="CHEBI:29105"/>
        <note>structural</note>
    </ligand>
</feature>
<feature type="binding site" evidence="1">
    <location>
        <position position="133"/>
    </location>
    <ligand>
        <name>Zn(2+)</name>
        <dbReference type="ChEBI" id="CHEBI:29105"/>
        <note>structural</note>
    </ligand>
</feature>
<feature type="binding site" evidence="1">
    <location>
        <position position="150"/>
    </location>
    <ligand>
        <name>Zn(2+)</name>
        <dbReference type="ChEBI" id="CHEBI:29105"/>
        <note>structural</note>
    </ligand>
</feature>
<feature type="binding site" evidence="1">
    <location>
        <position position="153"/>
    </location>
    <ligand>
        <name>Zn(2+)</name>
        <dbReference type="ChEBI" id="CHEBI:29105"/>
        <note>structural</note>
    </ligand>
</feature>
<feature type="binding site" evidence="1">
    <location>
        <position position="160"/>
    </location>
    <ligand>
        <name>AMP</name>
        <dbReference type="ChEBI" id="CHEBI:456215"/>
    </ligand>
</feature>
<feature type="binding site" evidence="1">
    <location>
        <position position="171"/>
    </location>
    <ligand>
        <name>AMP</name>
        <dbReference type="ChEBI" id="CHEBI:456215"/>
    </ligand>
</feature>
<feature type="binding site" evidence="1">
    <location>
        <position position="199"/>
    </location>
    <ligand>
        <name>ATP</name>
        <dbReference type="ChEBI" id="CHEBI:30616"/>
    </ligand>
</feature>
<proteinExistence type="inferred from homology"/>
<reference key="1">
    <citation type="journal article" date="2002" name="Nucleic Acids Res.">
        <title>Genome sequence of Oceanobacillus iheyensis isolated from the Iheya Ridge and its unexpected adaptive capabilities to extreme environments.</title>
        <authorList>
            <person name="Takami H."/>
            <person name="Takaki Y."/>
            <person name="Uchiyama I."/>
        </authorList>
    </citation>
    <scope>NUCLEOTIDE SEQUENCE [LARGE SCALE GENOMIC DNA]</scope>
    <source>
        <strain>DSM 14371 / CIP 107618 / JCM 11309 / KCTC 3954 / HTE831</strain>
    </source>
</reference>
<keyword id="KW-0067">ATP-binding</keyword>
<keyword id="KW-0963">Cytoplasm</keyword>
<keyword id="KW-0418">Kinase</keyword>
<keyword id="KW-0479">Metal-binding</keyword>
<keyword id="KW-0545">Nucleotide biosynthesis</keyword>
<keyword id="KW-0547">Nucleotide-binding</keyword>
<keyword id="KW-1185">Reference proteome</keyword>
<keyword id="KW-0808">Transferase</keyword>
<keyword id="KW-0862">Zinc</keyword>
<evidence type="ECO:0000255" key="1">
    <source>
        <dbReference type="HAMAP-Rule" id="MF_00235"/>
    </source>
</evidence>
<comment type="function">
    <text evidence="1">Catalyzes the reversible transfer of the terminal phosphate group between ATP and AMP. Plays an important role in cellular energy homeostasis and in adenine nucleotide metabolism.</text>
</comment>
<comment type="catalytic activity">
    <reaction evidence="1">
        <text>AMP + ATP = 2 ADP</text>
        <dbReference type="Rhea" id="RHEA:12973"/>
        <dbReference type="ChEBI" id="CHEBI:30616"/>
        <dbReference type="ChEBI" id="CHEBI:456215"/>
        <dbReference type="ChEBI" id="CHEBI:456216"/>
        <dbReference type="EC" id="2.7.4.3"/>
    </reaction>
</comment>
<comment type="pathway">
    <text evidence="1">Purine metabolism; AMP biosynthesis via salvage pathway; AMP from ADP: step 1/1.</text>
</comment>
<comment type="subunit">
    <text evidence="1">Monomer.</text>
</comment>
<comment type="subcellular location">
    <subcellularLocation>
        <location evidence="1">Cytoplasm</location>
    </subcellularLocation>
</comment>
<comment type="domain">
    <text evidence="1">Consists of three domains, a large central CORE domain and two small peripheral domains, NMPbind and LID, which undergo movements during catalysis. The LID domain closes over the site of phosphoryl transfer upon ATP binding. Assembling and dissambling the active center during each catalytic cycle provides an effective means to prevent ATP hydrolysis. Some bacteria have evolved a zinc-coordinating structure that stabilizes the LID domain.</text>
</comment>
<comment type="similarity">
    <text evidence="1">Belongs to the adenylate kinase family.</text>
</comment>
<protein>
    <recommendedName>
        <fullName evidence="1">Adenylate kinase</fullName>
        <shortName evidence="1">AK</shortName>
        <ecNumber evidence="1">2.7.4.3</ecNumber>
    </recommendedName>
    <alternativeName>
        <fullName evidence="1">ATP-AMP transphosphorylase</fullName>
    </alternativeName>
    <alternativeName>
        <fullName evidence="1">ATP:AMP phosphotransferase</fullName>
    </alternativeName>
    <alternativeName>
        <fullName evidence="1">Adenylate monophosphate kinase</fullName>
    </alternativeName>
</protein>
<accession>Q8ETW3</accession>